<gene>
    <name type="primary">rpl2-A</name>
</gene>
<gene>
    <name type="primary">rpl2-B</name>
</gene>
<dbReference type="EMBL" id="DQ424856">
    <property type="protein sequence ID" value="ABE47575.1"/>
    <property type="molecule type" value="Genomic_DNA"/>
</dbReference>
<dbReference type="SMR" id="Q0ZIX7"/>
<dbReference type="FunCoup" id="Q0ZIX7">
    <property type="interactions" value="770"/>
</dbReference>
<dbReference type="STRING" id="29760.Q0ZIX7"/>
<dbReference type="PaxDb" id="29760-VIT_03s0038g02790.t01"/>
<dbReference type="KEGG" id="vvi:4025024"/>
<dbReference type="eggNOG" id="KOG0438">
    <property type="taxonomic scope" value="Eukaryota"/>
</dbReference>
<dbReference type="InParanoid" id="Q0ZIX7"/>
<dbReference type="OrthoDB" id="867874at71240"/>
<dbReference type="Proteomes" id="UP000009183">
    <property type="component" value="Chloroplast"/>
</dbReference>
<dbReference type="ExpressionAtlas" id="Q0ZIX7">
    <property type="expression patterns" value="baseline and differential"/>
</dbReference>
<dbReference type="GO" id="GO:0009507">
    <property type="term" value="C:chloroplast"/>
    <property type="evidence" value="ECO:0007669"/>
    <property type="project" value="UniProtKB-SubCell"/>
</dbReference>
<dbReference type="GO" id="GO:0005762">
    <property type="term" value="C:mitochondrial large ribosomal subunit"/>
    <property type="evidence" value="ECO:0000318"/>
    <property type="project" value="GO_Central"/>
</dbReference>
<dbReference type="GO" id="GO:0003723">
    <property type="term" value="F:RNA binding"/>
    <property type="evidence" value="ECO:0000318"/>
    <property type="project" value="GO_Central"/>
</dbReference>
<dbReference type="GO" id="GO:0019843">
    <property type="term" value="F:rRNA binding"/>
    <property type="evidence" value="ECO:0007669"/>
    <property type="project" value="UniProtKB-UniRule"/>
</dbReference>
<dbReference type="GO" id="GO:0003735">
    <property type="term" value="F:structural constituent of ribosome"/>
    <property type="evidence" value="ECO:0000318"/>
    <property type="project" value="GO_Central"/>
</dbReference>
<dbReference type="GO" id="GO:0016740">
    <property type="term" value="F:transferase activity"/>
    <property type="evidence" value="ECO:0007669"/>
    <property type="project" value="InterPro"/>
</dbReference>
<dbReference type="GO" id="GO:0032543">
    <property type="term" value="P:mitochondrial translation"/>
    <property type="evidence" value="ECO:0000318"/>
    <property type="project" value="GO_Central"/>
</dbReference>
<dbReference type="FunFam" id="4.10.950.10:FF:000001">
    <property type="entry name" value="50S ribosomal protein L2"/>
    <property type="match status" value="1"/>
</dbReference>
<dbReference type="FunFam" id="2.30.30.30:FF:000008">
    <property type="entry name" value="50S ribosomal protein L2, chloroplastic"/>
    <property type="match status" value="1"/>
</dbReference>
<dbReference type="FunFam" id="2.40.50.140:FF:000029">
    <property type="entry name" value="50S ribosomal protein L2, chloroplastic"/>
    <property type="match status" value="1"/>
</dbReference>
<dbReference type="Gene3D" id="2.30.30.30">
    <property type="match status" value="1"/>
</dbReference>
<dbReference type="Gene3D" id="2.40.50.140">
    <property type="entry name" value="Nucleic acid-binding proteins"/>
    <property type="match status" value="1"/>
</dbReference>
<dbReference type="Gene3D" id="4.10.950.10">
    <property type="entry name" value="Ribosomal protein L2, domain 3"/>
    <property type="match status" value="1"/>
</dbReference>
<dbReference type="HAMAP" id="MF_01320_B">
    <property type="entry name" value="Ribosomal_uL2_B"/>
    <property type="match status" value="1"/>
</dbReference>
<dbReference type="InterPro" id="IPR012340">
    <property type="entry name" value="NA-bd_OB-fold"/>
</dbReference>
<dbReference type="InterPro" id="IPR014722">
    <property type="entry name" value="Rib_uL2_dom2"/>
</dbReference>
<dbReference type="InterPro" id="IPR002171">
    <property type="entry name" value="Ribosomal_uL2"/>
</dbReference>
<dbReference type="InterPro" id="IPR005880">
    <property type="entry name" value="Ribosomal_uL2_bac/org-type"/>
</dbReference>
<dbReference type="InterPro" id="IPR022669">
    <property type="entry name" value="Ribosomal_uL2_C"/>
</dbReference>
<dbReference type="InterPro" id="IPR022671">
    <property type="entry name" value="Ribosomal_uL2_CS"/>
</dbReference>
<dbReference type="InterPro" id="IPR014726">
    <property type="entry name" value="Ribosomal_uL2_dom3"/>
</dbReference>
<dbReference type="InterPro" id="IPR022666">
    <property type="entry name" value="Ribosomal_uL2_RNA-bd_dom"/>
</dbReference>
<dbReference type="InterPro" id="IPR008991">
    <property type="entry name" value="Translation_prot_SH3-like_sf"/>
</dbReference>
<dbReference type="NCBIfam" id="TIGR01171">
    <property type="entry name" value="rplB_bact"/>
    <property type="match status" value="1"/>
</dbReference>
<dbReference type="PANTHER" id="PTHR13691:SF5">
    <property type="entry name" value="LARGE RIBOSOMAL SUBUNIT PROTEIN UL2M"/>
    <property type="match status" value="1"/>
</dbReference>
<dbReference type="PANTHER" id="PTHR13691">
    <property type="entry name" value="RIBOSOMAL PROTEIN L2"/>
    <property type="match status" value="1"/>
</dbReference>
<dbReference type="Pfam" id="PF00181">
    <property type="entry name" value="Ribosomal_L2"/>
    <property type="match status" value="1"/>
</dbReference>
<dbReference type="Pfam" id="PF03947">
    <property type="entry name" value="Ribosomal_L2_C"/>
    <property type="match status" value="1"/>
</dbReference>
<dbReference type="PIRSF" id="PIRSF002158">
    <property type="entry name" value="Ribosomal_L2"/>
    <property type="match status" value="1"/>
</dbReference>
<dbReference type="SMART" id="SM01383">
    <property type="entry name" value="Ribosomal_L2"/>
    <property type="match status" value="1"/>
</dbReference>
<dbReference type="SMART" id="SM01382">
    <property type="entry name" value="Ribosomal_L2_C"/>
    <property type="match status" value="1"/>
</dbReference>
<dbReference type="SUPFAM" id="SSF50249">
    <property type="entry name" value="Nucleic acid-binding proteins"/>
    <property type="match status" value="1"/>
</dbReference>
<dbReference type="SUPFAM" id="SSF50104">
    <property type="entry name" value="Translation proteins SH3-like domain"/>
    <property type="match status" value="1"/>
</dbReference>
<dbReference type="PROSITE" id="PS00467">
    <property type="entry name" value="RIBOSOMAL_L2"/>
    <property type="match status" value="1"/>
</dbReference>
<organism>
    <name type="scientific">Vitis vinifera</name>
    <name type="common">Grape</name>
    <dbReference type="NCBI Taxonomy" id="29760"/>
    <lineage>
        <taxon>Eukaryota</taxon>
        <taxon>Viridiplantae</taxon>
        <taxon>Streptophyta</taxon>
        <taxon>Embryophyta</taxon>
        <taxon>Tracheophyta</taxon>
        <taxon>Spermatophyta</taxon>
        <taxon>Magnoliopsida</taxon>
        <taxon>eudicotyledons</taxon>
        <taxon>Gunneridae</taxon>
        <taxon>Pentapetalae</taxon>
        <taxon>rosids</taxon>
        <taxon>Vitales</taxon>
        <taxon>Vitaceae</taxon>
        <taxon>Viteae</taxon>
        <taxon>Vitis</taxon>
    </lineage>
</organism>
<protein>
    <recommendedName>
        <fullName evidence="2">Large ribosomal subunit protein uL2cz/uL2cy</fullName>
    </recommendedName>
    <alternativeName>
        <fullName evidence="4">50S ribosomal protein L2, chloroplastic</fullName>
    </alternativeName>
</protein>
<comment type="subunit">
    <text evidence="1">Part of the 50S ribosomal subunit.</text>
</comment>
<comment type="subcellular location">
    <subcellularLocation>
        <location>Plastid</location>
        <location>Chloroplast</location>
    </subcellularLocation>
</comment>
<comment type="similarity">
    <text evidence="4">Belongs to the universal ribosomal protein uL2 family.</text>
</comment>
<name>RK2_VITVI</name>
<sequence>MAIHLYKTSTPSTRNRAVDSQVKSNPRNNLIYGQHRCGKGRNARGIITAGHRGGGHKRLYRKIDFRRNEKDIYGRIVTIEYDPNRNAYICLIHYGDGEKRYILHPRGAIIGDTIVSGTEVPIKMGNALPLTDMPLGTAIHNIEITLGKGGQLARAAGAVAKLIAKEGKSATLKLPSGEVRLISKNCSATVGQVGNVGVNQKSLGRAGSKCWLGKRPVVRGVVMNPVDHPHGGGEGRAPIGRKKPTTPWGYPALGRRSRKRNKYSDNLILRRRSK</sequence>
<reference key="1">
    <citation type="journal article" date="2006" name="BMC Evol. Biol.">
        <title>Phylogenetic analyses of Vitis (Vitaceae) based on complete chloroplast genome sequences: effects of taxon sampling and phylogenetic methods on resolving relationships among rosids.</title>
        <authorList>
            <person name="Jansen R.K."/>
            <person name="Kaittanis C."/>
            <person name="Lee S.-B."/>
            <person name="Saski C."/>
            <person name="Tomkins J."/>
            <person name="Alverson A.J."/>
            <person name="Daniell H."/>
        </authorList>
    </citation>
    <scope>NUCLEOTIDE SEQUENCE [LARGE SCALE GENOMIC DNA]</scope>
    <source>
        <strain>cv. Maxxa</strain>
    </source>
</reference>
<feature type="chain" id="PRO_0000277103" description="Large ribosomal subunit protein uL2cz/uL2cy">
    <location>
        <begin position="1"/>
        <end position="274"/>
    </location>
</feature>
<feature type="region of interest" description="Disordered" evidence="3">
    <location>
        <begin position="1"/>
        <end position="23"/>
    </location>
</feature>
<feature type="region of interest" description="Disordered" evidence="3">
    <location>
        <begin position="224"/>
        <end position="274"/>
    </location>
</feature>
<proteinExistence type="inferred from homology"/>
<geneLocation type="chloroplast"/>
<keyword id="KW-0150">Chloroplast</keyword>
<keyword id="KW-0934">Plastid</keyword>
<keyword id="KW-1185">Reference proteome</keyword>
<keyword id="KW-0687">Ribonucleoprotein</keyword>
<keyword id="KW-0689">Ribosomal protein</keyword>
<accession>Q0ZIX7</accession>
<evidence type="ECO:0000250" key="1"/>
<evidence type="ECO:0000255" key="2">
    <source>
        <dbReference type="HAMAP-Rule" id="MF_01320"/>
    </source>
</evidence>
<evidence type="ECO:0000256" key="3">
    <source>
        <dbReference type="SAM" id="MobiDB-lite"/>
    </source>
</evidence>
<evidence type="ECO:0000305" key="4"/>